<evidence type="ECO:0007829" key="1">
    <source>
        <dbReference type="PDB" id="1OQ1"/>
    </source>
</evidence>
<name>YESU_BACSU</name>
<accession>O31524</accession>
<gene>
    <name type="primary">yesU</name>
    <name type="ordered locus">BSU07030</name>
</gene>
<proteinExistence type="evidence at protein level"/>
<organism>
    <name type="scientific">Bacillus subtilis (strain 168)</name>
    <dbReference type="NCBI Taxonomy" id="224308"/>
    <lineage>
        <taxon>Bacteria</taxon>
        <taxon>Bacillati</taxon>
        <taxon>Bacillota</taxon>
        <taxon>Bacilli</taxon>
        <taxon>Bacillales</taxon>
        <taxon>Bacillaceae</taxon>
        <taxon>Bacillus</taxon>
    </lineage>
</organism>
<feature type="chain" id="PRO_0000049520" description="Uncharacterized protein YesU">
    <location>
        <begin position="1"/>
        <end position="220"/>
    </location>
</feature>
<feature type="strand" evidence="1">
    <location>
        <begin position="2"/>
        <end position="11"/>
    </location>
</feature>
<feature type="helix" evidence="1">
    <location>
        <begin position="16"/>
        <end position="19"/>
    </location>
</feature>
<feature type="strand" evidence="1">
    <location>
        <begin position="23"/>
        <end position="31"/>
    </location>
</feature>
<feature type="helix" evidence="1">
    <location>
        <begin position="33"/>
        <end position="35"/>
    </location>
</feature>
<feature type="strand" evidence="1">
    <location>
        <begin position="36"/>
        <end position="43"/>
    </location>
</feature>
<feature type="strand" evidence="1">
    <location>
        <begin position="48"/>
        <end position="51"/>
    </location>
</feature>
<feature type="strand" evidence="1">
    <location>
        <begin position="58"/>
        <end position="70"/>
    </location>
</feature>
<feature type="strand" evidence="1">
    <location>
        <begin position="72"/>
        <end position="83"/>
    </location>
</feature>
<feature type="helix" evidence="1">
    <location>
        <begin position="102"/>
        <end position="105"/>
    </location>
</feature>
<feature type="strand" evidence="1">
    <location>
        <begin position="106"/>
        <end position="121"/>
    </location>
</feature>
<feature type="helix" evidence="1">
    <location>
        <begin position="122"/>
        <end position="125"/>
    </location>
</feature>
<feature type="strand" evidence="1">
    <location>
        <begin position="129"/>
        <end position="135"/>
    </location>
</feature>
<feature type="turn" evidence="1">
    <location>
        <begin position="136"/>
        <end position="138"/>
    </location>
</feature>
<feature type="strand" evidence="1">
    <location>
        <begin position="139"/>
        <end position="145"/>
    </location>
</feature>
<feature type="helix" evidence="1">
    <location>
        <begin position="151"/>
        <end position="153"/>
    </location>
</feature>
<feature type="strand" evidence="1">
    <location>
        <begin position="158"/>
        <end position="165"/>
    </location>
</feature>
<feature type="strand" evidence="1">
    <location>
        <begin position="168"/>
        <end position="173"/>
    </location>
</feature>
<feature type="strand" evidence="1">
    <location>
        <begin position="176"/>
        <end position="182"/>
    </location>
</feature>
<feature type="strand" evidence="1">
    <location>
        <begin position="185"/>
        <end position="190"/>
    </location>
</feature>
<feature type="strand" evidence="1">
    <location>
        <begin position="194"/>
        <end position="202"/>
    </location>
</feature>
<feature type="strand" evidence="1">
    <location>
        <begin position="206"/>
        <end position="219"/>
    </location>
</feature>
<protein>
    <recommendedName>
        <fullName>Uncharacterized protein YesU</fullName>
    </recommendedName>
</protein>
<reference key="1">
    <citation type="journal article" date="1997" name="Nature">
        <title>The complete genome sequence of the Gram-positive bacterium Bacillus subtilis.</title>
        <authorList>
            <person name="Kunst F."/>
            <person name="Ogasawara N."/>
            <person name="Moszer I."/>
            <person name="Albertini A.M."/>
            <person name="Alloni G."/>
            <person name="Azevedo V."/>
            <person name="Bertero M.G."/>
            <person name="Bessieres P."/>
            <person name="Bolotin A."/>
            <person name="Borchert S."/>
            <person name="Borriss R."/>
            <person name="Boursier L."/>
            <person name="Brans A."/>
            <person name="Braun M."/>
            <person name="Brignell S.C."/>
            <person name="Bron S."/>
            <person name="Brouillet S."/>
            <person name="Bruschi C.V."/>
            <person name="Caldwell B."/>
            <person name="Capuano V."/>
            <person name="Carter N.M."/>
            <person name="Choi S.-K."/>
            <person name="Codani J.-J."/>
            <person name="Connerton I.F."/>
            <person name="Cummings N.J."/>
            <person name="Daniel R.A."/>
            <person name="Denizot F."/>
            <person name="Devine K.M."/>
            <person name="Duesterhoeft A."/>
            <person name="Ehrlich S.D."/>
            <person name="Emmerson P.T."/>
            <person name="Entian K.-D."/>
            <person name="Errington J."/>
            <person name="Fabret C."/>
            <person name="Ferrari E."/>
            <person name="Foulger D."/>
            <person name="Fritz C."/>
            <person name="Fujita M."/>
            <person name="Fujita Y."/>
            <person name="Fuma S."/>
            <person name="Galizzi A."/>
            <person name="Galleron N."/>
            <person name="Ghim S.-Y."/>
            <person name="Glaser P."/>
            <person name="Goffeau A."/>
            <person name="Golightly E.J."/>
            <person name="Grandi G."/>
            <person name="Guiseppi G."/>
            <person name="Guy B.J."/>
            <person name="Haga K."/>
            <person name="Haiech J."/>
            <person name="Harwood C.R."/>
            <person name="Henaut A."/>
            <person name="Hilbert H."/>
            <person name="Holsappel S."/>
            <person name="Hosono S."/>
            <person name="Hullo M.-F."/>
            <person name="Itaya M."/>
            <person name="Jones L.-M."/>
            <person name="Joris B."/>
            <person name="Karamata D."/>
            <person name="Kasahara Y."/>
            <person name="Klaerr-Blanchard M."/>
            <person name="Klein C."/>
            <person name="Kobayashi Y."/>
            <person name="Koetter P."/>
            <person name="Koningstein G."/>
            <person name="Krogh S."/>
            <person name="Kumano M."/>
            <person name="Kurita K."/>
            <person name="Lapidus A."/>
            <person name="Lardinois S."/>
            <person name="Lauber J."/>
            <person name="Lazarevic V."/>
            <person name="Lee S.-M."/>
            <person name="Levine A."/>
            <person name="Liu H."/>
            <person name="Masuda S."/>
            <person name="Mauel C."/>
            <person name="Medigue C."/>
            <person name="Medina N."/>
            <person name="Mellado R.P."/>
            <person name="Mizuno M."/>
            <person name="Moestl D."/>
            <person name="Nakai S."/>
            <person name="Noback M."/>
            <person name="Noone D."/>
            <person name="O'Reilly M."/>
            <person name="Ogawa K."/>
            <person name="Ogiwara A."/>
            <person name="Oudega B."/>
            <person name="Park S.-H."/>
            <person name="Parro V."/>
            <person name="Pohl T.M."/>
            <person name="Portetelle D."/>
            <person name="Porwollik S."/>
            <person name="Prescott A.M."/>
            <person name="Presecan E."/>
            <person name="Pujic P."/>
            <person name="Purnelle B."/>
            <person name="Rapoport G."/>
            <person name="Rey M."/>
            <person name="Reynolds S."/>
            <person name="Rieger M."/>
            <person name="Rivolta C."/>
            <person name="Rocha E."/>
            <person name="Roche B."/>
            <person name="Rose M."/>
            <person name="Sadaie Y."/>
            <person name="Sato T."/>
            <person name="Scanlan E."/>
            <person name="Schleich S."/>
            <person name="Schroeter R."/>
            <person name="Scoffone F."/>
            <person name="Sekiguchi J."/>
            <person name="Sekowska A."/>
            <person name="Seror S.J."/>
            <person name="Serror P."/>
            <person name="Shin B.-S."/>
            <person name="Soldo B."/>
            <person name="Sorokin A."/>
            <person name="Tacconi E."/>
            <person name="Takagi T."/>
            <person name="Takahashi H."/>
            <person name="Takemaru K."/>
            <person name="Takeuchi M."/>
            <person name="Tamakoshi A."/>
            <person name="Tanaka T."/>
            <person name="Terpstra P."/>
            <person name="Tognoni A."/>
            <person name="Tosato V."/>
            <person name="Uchiyama S."/>
            <person name="Vandenbol M."/>
            <person name="Vannier F."/>
            <person name="Vassarotti A."/>
            <person name="Viari A."/>
            <person name="Wambutt R."/>
            <person name="Wedler E."/>
            <person name="Wedler H."/>
            <person name="Weitzenegger T."/>
            <person name="Winters P."/>
            <person name="Wipat A."/>
            <person name="Yamamoto H."/>
            <person name="Yamane K."/>
            <person name="Yasumoto K."/>
            <person name="Yata K."/>
            <person name="Yoshida K."/>
            <person name="Yoshikawa H.-F."/>
            <person name="Zumstein E."/>
            <person name="Yoshikawa H."/>
            <person name="Danchin A."/>
        </authorList>
    </citation>
    <scope>NUCLEOTIDE SEQUENCE [LARGE SCALE GENOMIC DNA]</scope>
    <source>
        <strain>168</strain>
    </source>
</reference>
<reference key="2">
    <citation type="submission" date="2005-01" db="PDB data bank">
        <title>Crystal structure of the Bacillus subtilis hypothetical protein of APC1120.</title>
        <authorList>
            <consortium name="Midwest center for structural genomics (MCSG)"/>
        </authorList>
    </citation>
    <scope>X-RAY CRYSTALLOGRAPHY (1.7 ANGSTROMS)</scope>
</reference>
<keyword id="KW-0002">3D-structure</keyword>
<keyword id="KW-1185">Reference proteome</keyword>
<dbReference type="EMBL" id="AL009126">
    <property type="protein sequence ID" value="CAB12522.1"/>
    <property type="molecule type" value="Genomic_DNA"/>
</dbReference>
<dbReference type="PIR" id="D69797">
    <property type="entry name" value="D69797"/>
</dbReference>
<dbReference type="RefSeq" id="NP_388584.1">
    <property type="nucleotide sequence ID" value="NC_000964.3"/>
</dbReference>
<dbReference type="RefSeq" id="WP_003233822.1">
    <property type="nucleotide sequence ID" value="NZ_OZ025638.1"/>
</dbReference>
<dbReference type="PDB" id="1OQ1">
    <property type="method" value="X-ray"/>
    <property type="resolution" value="1.70 A"/>
    <property type="chains" value="A/B/C/D=1-220"/>
</dbReference>
<dbReference type="PDBsum" id="1OQ1"/>
<dbReference type="SMR" id="O31524"/>
<dbReference type="FunCoup" id="O31524">
    <property type="interactions" value="17"/>
</dbReference>
<dbReference type="STRING" id="224308.BSU07030"/>
<dbReference type="PaxDb" id="224308-BSU07030"/>
<dbReference type="EnsemblBacteria" id="CAB12522">
    <property type="protein sequence ID" value="CAB12522"/>
    <property type="gene ID" value="BSU_07030"/>
</dbReference>
<dbReference type="GeneID" id="936083"/>
<dbReference type="KEGG" id="bsu:BSU07030"/>
<dbReference type="PATRIC" id="fig|224308.179.peg.763"/>
<dbReference type="eggNOG" id="ENOG502ZUE2">
    <property type="taxonomic scope" value="Bacteria"/>
</dbReference>
<dbReference type="InParanoid" id="O31524"/>
<dbReference type="OrthoDB" id="7171052at2"/>
<dbReference type="BioCyc" id="BSUB:BSU07030-MONOMER"/>
<dbReference type="EvolutionaryTrace" id="O31524"/>
<dbReference type="Proteomes" id="UP000001570">
    <property type="component" value="Chromosome"/>
</dbReference>
<dbReference type="Gene3D" id="2.60.120.200">
    <property type="match status" value="1"/>
</dbReference>
<dbReference type="InterPro" id="IPR013320">
    <property type="entry name" value="ConA-like_dom_sf"/>
</dbReference>
<dbReference type="InterPro" id="IPR015305">
    <property type="entry name" value="DUF1961"/>
</dbReference>
<dbReference type="Pfam" id="PF09224">
    <property type="entry name" value="DUF1961"/>
    <property type="match status" value="1"/>
</dbReference>
<dbReference type="SUPFAM" id="SSF49899">
    <property type="entry name" value="Concanavalin A-like lectins/glucanases"/>
    <property type="match status" value="1"/>
</dbReference>
<sequence length="220" mass="25203">MYKEGACLYRNPLRSKSDVKDWRMEGGGQISFDDHSLHLSHVQDEAHFVFWCPETFPDGIIVTWDFSPIEQPGLCMLFFAAAGIRGEDLFDPSLRKRTGTYPEYHSGDINALHLSYFRRKYAEERAFRTCNLRKSRGFHLAAMGADPLPSPDDADSPYRMKLIKDKGYVHFSINGLPILEWMDDGSTYGPVLTKGKIGFRQMAPMKAVYRDFAVHQAVRR</sequence>